<protein>
    <recommendedName>
        <fullName>Centrosomal protein of 120 kDa</fullName>
        <shortName>Cep120</shortName>
    </recommendedName>
    <alternativeName>
        <fullName>Coiled-coil domain-containing protein 100</fullName>
    </alternativeName>
</protein>
<evidence type="ECO:0000250" key="1"/>
<evidence type="ECO:0000250" key="2">
    <source>
        <dbReference type="UniProtKB" id="Q8N960"/>
    </source>
</evidence>
<evidence type="ECO:0000255" key="3"/>
<evidence type="ECO:0000255" key="4">
    <source>
        <dbReference type="PROSITE-ProRule" id="PRU00041"/>
    </source>
</evidence>
<evidence type="ECO:0000256" key="5">
    <source>
        <dbReference type="SAM" id="MobiDB-lite"/>
    </source>
</evidence>
<evidence type="ECO:0000305" key="6"/>
<dbReference type="EMBL" id="BC161079">
    <property type="protein sequence ID" value="AAI61079.1"/>
    <property type="molecule type" value="mRNA"/>
</dbReference>
<dbReference type="RefSeq" id="NP_001120380.1">
    <property type="nucleotide sequence ID" value="NM_001126908.1"/>
</dbReference>
<dbReference type="SMR" id="B1H2P5"/>
<dbReference type="FunCoup" id="B1H2P5">
    <property type="interactions" value="1656"/>
</dbReference>
<dbReference type="STRING" id="8364.ENSXETP00000048439"/>
<dbReference type="PaxDb" id="8364-ENSXETP00000057155"/>
<dbReference type="GeneID" id="100145455"/>
<dbReference type="KEGG" id="xtr:100145455"/>
<dbReference type="AGR" id="Xenbase:XB-GENE-5872143"/>
<dbReference type="CTD" id="153241"/>
<dbReference type="Xenbase" id="XB-GENE-5872143">
    <property type="gene designation" value="cep120"/>
</dbReference>
<dbReference type="eggNOG" id="ENOG502QPT0">
    <property type="taxonomic scope" value="Eukaryota"/>
</dbReference>
<dbReference type="InParanoid" id="B1H2P5"/>
<dbReference type="OrthoDB" id="332250at2759"/>
<dbReference type="Proteomes" id="UP000008143">
    <property type="component" value="Chromosome 1"/>
</dbReference>
<dbReference type="GO" id="GO:0005813">
    <property type="term" value="C:centrosome"/>
    <property type="evidence" value="ECO:0000250"/>
    <property type="project" value="UniProtKB"/>
</dbReference>
<dbReference type="GO" id="GO:0005737">
    <property type="term" value="C:cytoplasm"/>
    <property type="evidence" value="ECO:0007669"/>
    <property type="project" value="UniProtKB-KW"/>
</dbReference>
<dbReference type="FunFam" id="2.60.40.150:FF:000112">
    <property type="entry name" value="centrosomal protein of 120 kDa isoform X1"/>
    <property type="match status" value="1"/>
</dbReference>
<dbReference type="Gene3D" id="2.60.40.150">
    <property type="entry name" value="C2 domain"/>
    <property type="match status" value="1"/>
</dbReference>
<dbReference type="InterPro" id="IPR000008">
    <property type="entry name" value="C2_dom"/>
</dbReference>
<dbReference type="InterPro" id="IPR035892">
    <property type="entry name" value="C2_domain_sf"/>
</dbReference>
<dbReference type="InterPro" id="IPR039893">
    <property type="entry name" value="CEP120-like"/>
</dbReference>
<dbReference type="InterPro" id="IPR022136">
    <property type="entry name" value="DUF3668"/>
</dbReference>
<dbReference type="PANTHER" id="PTHR21574">
    <property type="entry name" value="CENTROSOMAL PROTEIN OF 120 KDA"/>
    <property type="match status" value="1"/>
</dbReference>
<dbReference type="PANTHER" id="PTHR21574:SF0">
    <property type="entry name" value="CENTROSOMAL PROTEIN OF 120 KDA"/>
    <property type="match status" value="1"/>
</dbReference>
<dbReference type="Pfam" id="PF00168">
    <property type="entry name" value="C2"/>
    <property type="match status" value="2"/>
</dbReference>
<dbReference type="Pfam" id="PF12416">
    <property type="entry name" value="DUF3668"/>
    <property type="match status" value="1"/>
</dbReference>
<dbReference type="SUPFAM" id="SSF49562">
    <property type="entry name" value="C2 domain (Calcium/lipid-binding domain, CaLB)"/>
    <property type="match status" value="1"/>
</dbReference>
<dbReference type="PROSITE" id="PS50004">
    <property type="entry name" value="C2"/>
    <property type="match status" value="2"/>
</dbReference>
<comment type="function">
    <text evidence="1">Plays a role in the microtubule-dependent coupling of the nucleus and the centrosome.</text>
</comment>
<comment type="subcellular location">
    <subcellularLocation>
        <location evidence="2">Cytoplasm</location>
        <location evidence="2">Cytoskeleton</location>
        <location evidence="2">Microtubule organizing center</location>
        <location evidence="2">Centrosome</location>
    </subcellularLocation>
</comment>
<comment type="similarity">
    <text evidence="6">Belongs to the CEP120 family.</text>
</comment>
<proteinExistence type="evidence at transcript level"/>
<reference key="1">
    <citation type="submission" date="2008-03" db="EMBL/GenBank/DDBJ databases">
        <authorList>
            <consortium name="NIH - Xenopus Gene Collection (XGC) project"/>
        </authorList>
    </citation>
    <scope>NUCLEOTIDE SEQUENCE [LARGE SCALE MRNA]</scope>
    <source>
        <tissue>Testis</tissue>
    </source>
</reference>
<keyword id="KW-0175">Coiled coil</keyword>
<keyword id="KW-0963">Cytoplasm</keyword>
<keyword id="KW-0206">Cytoskeleton</keyword>
<keyword id="KW-1185">Reference proteome</keyword>
<keyword id="KW-0677">Repeat</keyword>
<name>CE120_XENTR</name>
<feature type="chain" id="PRO_0000348264" description="Centrosomal protein of 120 kDa">
    <location>
        <begin position="1"/>
        <end position="882"/>
    </location>
</feature>
<feature type="domain" description="C2 1" evidence="4">
    <location>
        <begin position="1"/>
        <end position="112"/>
    </location>
</feature>
<feature type="domain" description="C2 2" evidence="4">
    <location>
        <begin position="453"/>
        <end position="582"/>
    </location>
</feature>
<feature type="region of interest" description="Disordered" evidence="5">
    <location>
        <begin position="348"/>
        <end position="443"/>
    </location>
</feature>
<feature type="coiled-coil region" evidence="3">
    <location>
        <begin position="709"/>
        <end position="882"/>
    </location>
</feature>
<feature type="compositionally biased region" description="Low complexity" evidence="5">
    <location>
        <begin position="423"/>
        <end position="436"/>
    </location>
</feature>
<organism>
    <name type="scientific">Xenopus tropicalis</name>
    <name type="common">Western clawed frog</name>
    <name type="synonym">Silurana tropicalis</name>
    <dbReference type="NCBI Taxonomy" id="8364"/>
    <lineage>
        <taxon>Eukaryota</taxon>
        <taxon>Metazoa</taxon>
        <taxon>Chordata</taxon>
        <taxon>Craniata</taxon>
        <taxon>Vertebrata</taxon>
        <taxon>Euteleostomi</taxon>
        <taxon>Amphibia</taxon>
        <taxon>Batrachia</taxon>
        <taxon>Anura</taxon>
        <taxon>Pipoidea</taxon>
        <taxon>Pipidae</taxon>
        <taxon>Xenopodinae</taxon>
        <taxon>Xenopus</taxon>
        <taxon>Silurana</taxon>
    </lineage>
</organism>
<sequence length="882" mass="100324">MGYKSDQLLIVVSILEGRHFPKRSRHMLVIDAKFDGEQLSTDPVPHLEQPQFATELAWELDRKTLHQHRLQRTPIKLQCFALDTLTSAKESVGYVVLDLRAAQEKKQAPKWYSLLSSKYTKFKPEIQLNISLETDNKPAVDTFKAKEAPPRRSKVPGDLAGLEPKSLVPILNEAEGYHQIGPAEYCKDYFVLSVTIAFATQLEQLIPSTLRLPEPQPEFFFYYSLLGNDVTNEPFTDLINPEFEPERASVRIRSSKEVLCMYLSVQPKLQIHLCCGDQSLGSTDIALTGLLNKASVEIEHHPVVVEGAFILTPPNRAKQNLSAVPLEMSPTIGVSIALQKEIGLQSVHHPKEQPQSVAAEEVPTTPLKKSANLKEGARSPPPPKPLMFSDSPPTKDEATESEAESIKSDFQAEPPLSKPLTRSKSPPLSEPPLSGSHCPTPIQGVSAIAKNTSESSSAQKITVPPAAHHFCFTIDLRSIRNVDVGFPVNCILRYSYPFFGSAAPIMTNPPVEVQKNMEVFLPQSYCAFDFATLPHQIQDTFLRLPLLVELWHKDKMTKDLLIGVTKIQLSNVLSSEKTRFLGPHGDQCWRQTFSERITVTAVEGSKNKVAELSYIITLEDYGLVKVREVVVSESSQSTGQEKGSLPAQTLQSTAPLPEPRETLEYKAALELEMWKEMQEDLFVNQLKKKELVHMQALAEEWKRRDKEREALVKKKVAEYTVLEEQLQKALADLEKRERQLANDEMELKKLKAQMQLDCERSIQERQDSIRRVREDCMHQIELERSKAKQLEEDKLRLQQQVELERKLESTTKSKLHYKQQWGRALKELARLKQREQENAMARLKKQQQELEHMRLRYLAAEEKDVVKTERQELEEIRNELNR</sequence>
<gene>
    <name type="primary">cep120</name>
    <name type="synonym">ccdc100</name>
</gene>
<accession>B1H2P5</accession>